<feature type="signal peptide" evidence="2">
    <location>
        <begin position="1"/>
        <end position="19"/>
    </location>
</feature>
<feature type="propeptide" id="PRO_0000404814" evidence="1">
    <location>
        <begin position="20"/>
        <end position="45"/>
    </location>
</feature>
<feature type="peptide" id="PRO_0000404815" description="Conotoxin LeD51">
    <location>
        <begin position="46"/>
        <end position="76"/>
    </location>
</feature>
<feature type="disulfide bond" evidence="1">
    <location>
        <begin position="51"/>
        <end position="65"/>
    </location>
</feature>
<feature type="disulfide bond" evidence="1">
    <location>
        <begin position="58"/>
        <end position="69"/>
    </location>
</feature>
<feature type="disulfide bond" evidence="1">
    <location>
        <begin position="64"/>
        <end position="73"/>
    </location>
</feature>
<protein>
    <recommendedName>
        <fullName>Conotoxin LeD51</fullName>
    </recommendedName>
</protein>
<comment type="subcellular location">
    <subcellularLocation>
        <location evidence="1">Secreted</location>
    </subcellularLocation>
</comment>
<comment type="tissue specificity">
    <text>Expressed by the venom duct.</text>
</comment>
<comment type="domain">
    <text evidence="1">The presence of a 'disulfide through disulfide knot' structurally defines this protein as a knottin.</text>
</comment>
<comment type="domain">
    <text>The cysteine framework is VI/VII (C-C-CC-C-C).</text>
</comment>
<comment type="similarity">
    <text evidence="3">Belongs to the conotoxin O2 superfamily.</text>
</comment>
<proteinExistence type="evidence at transcript level"/>
<evidence type="ECO:0000250" key="1"/>
<evidence type="ECO:0000255" key="2"/>
<evidence type="ECO:0000305" key="3"/>
<name>O2651_CONLT</name>
<accession>Q3YEF7</accession>
<sequence>MEKLTILLLVAAVLMSTQALVERAGENRSKENIKFLLKRKRAADRGMWGKCKDGLTTCLAPSECCSGNCEQNCKMW</sequence>
<organism>
    <name type="scientific">Conus litteratus</name>
    <name type="common">Lettered cone</name>
    <dbReference type="NCBI Taxonomy" id="89445"/>
    <lineage>
        <taxon>Eukaryota</taxon>
        <taxon>Metazoa</taxon>
        <taxon>Spiralia</taxon>
        <taxon>Lophotrochozoa</taxon>
        <taxon>Mollusca</taxon>
        <taxon>Gastropoda</taxon>
        <taxon>Caenogastropoda</taxon>
        <taxon>Neogastropoda</taxon>
        <taxon>Conoidea</taxon>
        <taxon>Conidae</taxon>
        <taxon>Conus</taxon>
        <taxon>Elisaconus</taxon>
    </lineage>
</organism>
<reference key="1">
    <citation type="submission" date="2005-07" db="EMBL/GenBank/DDBJ databases">
        <title>Novel O-superfamily conotoxins, and their coding polynucleotides and use.</title>
        <authorList>
            <person name="Luo S."/>
            <person name="Zhangsun D."/>
            <person name="Zhang B."/>
            <person name="Lin Q."/>
        </authorList>
    </citation>
    <scope>NUCLEOTIDE SEQUENCE [MRNA]</scope>
</reference>
<keyword id="KW-1015">Disulfide bond</keyword>
<keyword id="KW-0960">Knottin</keyword>
<keyword id="KW-0528">Neurotoxin</keyword>
<keyword id="KW-0964">Secreted</keyword>
<keyword id="KW-0732">Signal</keyword>
<keyword id="KW-0800">Toxin</keyword>
<dbReference type="EMBL" id="DQ141156">
    <property type="protein sequence ID" value="AAZ83757.1"/>
    <property type="molecule type" value="mRNA"/>
</dbReference>
<dbReference type="SMR" id="Q3YEF7"/>
<dbReference type="ConoServer" id="1116">
    <property type="toxin name" value="Lt6.2 precursor"/>
</dbReference>
<dbReference type="GO" id="GO:0005576">
    <property type="term" value="C:extracellular region"/>
    <property type="evidence" value="ECO:0007669"/>
    <property type="project" value="UniProtKB-SubCell"/>
</dbReference>
<dbReference type="GO" id="GO:0008200">
    <property type="term" value="F:ion channel inhibitor activity"/>
    <property type="evidence" value="ECO:0007669"/>
    <property type="project" value="InterPro"/>
</dbReference>
<dbReference type="GO" id="GO:0090729">
    <property type="term" value="F:toxin activity"/>
    <property type="evidence" value="ECO:0007669"/>
    <property type="project" value="UniProtKB-KW"/>
</dbReference>
<dbReference type="InterPro" id="IPR004214">
    <property type="entry name" value="Conotoxin"/>
</dbReference>
<dbReference type="Pfam" id="PF02950">
    <property type="entry name" value="Conotoxin"/>
    <property type="match status" value="1"/>
</dbReference>